<reference key="1">
    <citation type="journal article" date="2007" name="J. Bacteriol.">
        <title>Whole-genome analysis of the methyl tert-butyl ether-degrading beta-proteobacterium Methylibium petroleiphilum PM1.</title>
        <authorList>
            <person name="Kane S.R."/>
            <person name="Chakicherla A.Y."/>
            <person name="Chain P.S.G."/>
            <person name="Schmidt R."/>
            <person name="Shin M.W."/>
            <person name="Legler T.C."/>
            <person name="Scow K.M."/>
            <person name="Larimer F.W."/>
            <person name="Lucas S.M."/>
            <person name="Richardson P.M."/>
            <person name="Hristova K.R."/>
        </authorList>
    </citation>
    <scope>NUCLEOTIDE SEQUENCE [LARGE SCALE GENOMIC DNA]</scope>
    <source>
        <strain>ATCC BAA-1232 / LMG 22953 / PM1</strain>
    </source>
</reference>
<dbReference type="EC" id="7.4.2.8" evidence="1"/>
<dbReference type="EMBL" id="CP000555">
    <property type="protein sequence ID" value="ABM95698.1"/>
    <property type="molecule type" value="Genomic_DNA"/>
</dbReference>
<dbReference type="RefSeq" id="WP_011830327.1">
    <property type="nucleotide sequence ID" value="NC_008825.1"/>
</dbReference>
<dbReference type="SMR" id="A2SJF9"/>
<dbReference type="STRING" id="420662.Mpe_A2744"/>
<dbReference type="KEGG" id="mpt:Mpe_A2744"/>
<dbReference type="eggNOG" id="COG0653">
    <property type="taxonomic scope" value="Bacteria"/>
</dbReference>
<dbReference type="HOGENOM" id="CLU_005314_3_0_4"/>
<dbReference type="Proteomes" id="UP000000366">
    <property type="component" value="Chromosome"/>
</dbReference>
<dbReference type="GO" id="GO:0031522">
    <property type="term" value="C:cell envelope Sec protein transport complex"/>
    <property type="evidence" value="ECO:0007669"/>
    <property type="project" value="TreeGrafter"/>
</dbReference>
<dbReference type="GO" id="GO:0005829">
    <property type="term" value="C:cytosol"/>
    <property type="evidence" value="ECO:0007669"/>
    <property type="project" value="TreeGrafter"/>
</dbReference>
<dbReference type="GO" id="GO:0005886">
    <property type="term" value="C:plasma membrane"/>
    <property type="evidence" value="ECO:0007669"/>
    <property type="project" value="UniProtKB-SubCell"/>
</dbReference>
<dbReference type="GO" id="GO:0005524">
    <property type="term" value="F:ATP binding"/>
    <property type="evidence" value="ECO:0007669"/>
    <property type="project" value="UniProtKB-UniRule"/>
</dbReference>
<dbReference type="GO" id="GO:0046872">
    <property type="term" value="F:metal ion binding"/>
    <property type="evidence" value="ECO:0007669"/>
    <property type="project" value="UniProtKB-KW"/>
</dbReference>
<dbReference type="GO" id="GO:0008564">
    <property type="term" value="F:protein-exporting ATPase activity"/>
    <property type="evidence" value="ECO:0007669"/>
    <property type="project" value="UniProtKB-EC"/>
</dbReference>
<dbReference type="GO" id="GO:0065002">
    <property type="term" value="P:intracellular protein transmembrane transport"/>
    <property type="evidence" value="ECO:0007669"/>
    <property type="project" value="UniProtKB-UniRule"/>
</dbReference>
<dbReference type="GO" id="GO:0017038">
    <property type="term" value="P:protein import"/>
    <property type="evidence" value="ECO:0007669"/>
    <property type="project" value="InterPro"/>
</dbReference>
<dbReference type="GO" id="GO:0006605">
    <property type="term" value="P:protein targeting"/>
    <property type="evidence" value="ECO:0007669"/>
    <property type="project" value="UniProtKB-UniRule"/>
</dbReference>
<dbReference type="GO" id="GO:0043952">
    <property type="term" value="P:protein transport by the Sec complex"/>
    <property type="evidence" value="ECO:0007669"/>
    <property type="project" value="TreeGrafter"/>
</dbReference>
<dbReference type="CDD" id="cd17928">
    <property type="entry name" value="DEXDc_SecA"/>
    <property type="match status" value="1"/>
</dbReference>
<dbReference type="CDD" id="cd18803">
    <property type="entry name" value="SF2_C_secA"/>
    <property type="match status" value="1"/>
</dbReference>
<dbReference type="FunFam" id="3.40.50.300:FF:000081">
    <property type="entry name" value="Preprotein translocase subunit SecA"/>
    <property type="match status" value="1"/>
</dbReference>
<dbReference type="FunFam" id="3.40.50.300:FF:000113">
    <property type="entry name" value="Preprotein translocase subunit SecA"/>
    <property type="match status" value="1"/>
</dbReference>
<dbReference type="FunFam" id="3.90.1440.10:FF:000001">
    <property type="entry name" value="Preprotein translocase subunit SecA"/>
    <property type="match status" value="1"/>
</dbReference>
<dbReference type="FunFam" id="1.10.3060.10:FF:000003">
    <property type="entry name" value="Protein translocase subunit SecA"/>
    <property type="match status" value="1"/>
</dbReference>
<dbReference type="Gene3D" id="1.10.3060.10">
    <property type="entry name" value="Helical scaffold and wing domains of SecA"/>
    <property type="match status" value="1"/>
</dbReference>
<dbReference type="Gene3D" id="3.40.50.300">
    <property type="entry name" value="P-loop containing nucleotide triphosphate hydrolases"/>
    <property type="match status" value="2"/>
</dbReference>
<dbReference type="Gene3D" id="3.90.1440.10">
    <property type="entry name" value="SecA, preprotein cross-linking domain"/>
    <property type="match status" value="1"/>
</dbReference>
<dbReference type="HAMAP" id="MF_01382">
    <property type="entry name" value="SecA"/>
    <property type="match status" value="1"/>
</dbReference>
<dbReference type="InterPro" id="IPR014001">
    <property type="entry name" value="Helicase_ATP-bd"/>
</dbReference>
<dbReference type="InterPro" id="IPR001650">
    <property type="entry name" value="Helicase_C-like"/>
</dbReference>
<dbReference type="InterPro" id="IPR027417">
    <property type="entry name" value="P-loop_NTPase"/>
</dbReference>
<dbReference type="InterPro" id="IPR004027">
    <property type="entry name" value="SEC_C_motif"/>
</dbReference>
<dbReference type="InterPro" id="IPR000185">
    <property type="entry name" value="SecA"/>
</dbReference>
<dbReference type="InterPro" id="IPR020937">
    <property type="entry name" value="SecA_CS"/>
</dbReference>
<dbReference type="InterPro" id="IPR011115">
    <property type="entry name" value="SecA_DEAD"/>
</dbReference>
<dbReference type="InterPro" id="IPR014018">
    <property type="entry name" value="SecA_motor_DEAD"/>
</dbReference>
<dbReference type="InterPro" id="IPR011130">
    <property type="entry name" value="SecA_preprotein_X-link_dom"/>
</dbReference>
<dbReference type="InterPro" id="IPR044722">
    <property type="entry name" value="SecA_SF2_C"/>
</dbReference>
<dbReference type="InterPro" id="IPR011116">
    <property type="entry name" value="SecA_Wing/Scaffold"/>
</dbReference>
<dbReference type="InterPro" id="IPR036266">
    <property type="entry name" value="SecA_Wing/Scaffold_sf"/>
</dbReference>
<dbReference type="InterPro" id="IPR036670">
    <property type="entry name" value="SecA_X-link_sf"/>
</dbReference>
<dbReference type="NCBIfam" id="NF009538">
    <property type="entry name" value="PRK12904.1"/>
    <property type="match status" value="1"/>
</dbReference>
<dbReference type="NCBIfam" id="TIGR00963">
    <property type="entry name" value="secA"/>
    <property type="match status" value="1"/>
</dbReference>
<dbReference type="PANTHER" id="PTHR30612:SF0">
    <property type="entry name" value="CHLOROPLAST PROTEIN-TRANSPORTING ATPASE"/>
    <property type="match status" value="1"/>
</dbReference>
<dbReference type="PANTHER" id="PTHR30612">
    <property type="entry name" value="SECA INNER MEMBRANE COMPONENT OF SEC PROTEIN SECRETION SYSTEM"/>
    <property type="match status" value="1"/>
</dbReference>
<dbReference type="Pfam" id="PF21090">
    <property type="entry name" value="P-loop_SecA"/>
    <property type="match status" value="1"/>
</dbReference>
<dbReference type="Pfam" id="PF02810">
    <property type="entry name" value="SEC-C"/>
    <property type="match status" value="1"/>
</dbReference>
<dbReference type="Pfam" id="PF07517">
    <property type="entry name" value="SecA_DEAD"/>
    <property type="match status" value="1"/>
</dbReference>
<dbReference type="Pfam" id="PF01043">
    <property type="entry name" value="SecA_PP_bind"/>
    <property type="match status" value="1"/>
</dbReference>
<dbReference type="Pfam" id="PF07516">
    <property type="entry name" value="SecA_SW"/>
    <property type="match status" value="1"/>
</dbReference>
<dbReference type="PRINTS" id="PR00906">
    <property type="entry name" value="SECA"/>
</dbReference>
<dbReference type="SMART" id="SM00957">
    <property type="entry name" value="SecA_DEAD"/>
    <property type="match status" value="1"/>
</dbReference>
<dbReference type="SMART" id="SM00958">
    <property type="entry name" value="SecA_PP_bind"/>
    <property type="match status" value="1"/>
</dbReference>
<dbReference type="SUPFAM" id="SSF81886">
    <property type="entry name" value="Helical scaffold and wing domains of SecA"/>
    <property type="match status" value="1"/>
</dbReference>
<dbReference type="SUPFAM" id="SSF52540">
    <property type="entry name" value="P-loop containing nucleoside triphosphate hydrolases"/>
    <property type="match status" value="2"/>
</dbReference>
<dbReference type="SUPFAM" id="SSF81767">
    <property type="entry name" value="Pre-protein crosslinking domain of SecA"/>
    <property type="match status" value="1"/>
</dbReference>
<dbReference type="PROSITE" id="PS01312">
    <property type="entry name" value="SECA"/>
    <property type="match status" value="1"/>
</dbReference>
<dbReference type="PROSITE" id="PS51196">
    <property type="entry name" value="SECA_MOTOR_DEAD"/>
    <property type="match status" value="1"/>
</dbReference>
<proteinExistence type="inferred from homology"/>
<organism>
    <name type="scientific">Methylibium petroleiphilum (strain ATCC BAA-1232 / LMG 22953 / PM1)</name>
    <dbReference type="NCBI Taxonomy" id="420662"/>
    <lineage>
        <taxon>Bacteria</taxon>
        <taxon>Pseudomonadati</taxon>
        <taxon>Pseudomonadota</taxon>
        <taxon>Betaproteobacteria</taxon>
        <taxon>Burkholderiales</taxon>
        <taxon>Sphaerotilaceae</taxon>
        <taxon>Methylibium</taxon>
    </lineage>
</organism>
<accession>A2SJF9</accession>
<evidence type="ECO:0000255" key="1">
    <source>
        <dbReference type="HAMAP-Rule" id="MF_01382"/>
    </source>
</evidence>
<protein>
    <recommendedName>
        <fullName evidence="1">Protein translocase subunit SecA</fullName>
        <ecNumber evidence="1">7.4.2.8</ecNumber>
    </recommendedName>
</protein>
<keyword id="KW-0067">ATP-binding</keyword>
<keyword id="KW-0997">Cell inner membrane</keyword>
<keyword id="KW-1003">Cell membrane</keyword>
<keyword id="KW-0963">Cytoplasm</keyword>
<keyword id="KW-0472">Membrane</keyword>
<keyword id="KW-0479">Metal-binding</keyword>
<keyword id="KW-0547">Nucleotide-binding</keyword>
<keyword id="KW-0653">Protein transport</keyword>
<keyword id="KW-1185">Reference proteome</keyword>
<keyword id="KW-1278">Translocase</keyword>
<keyword id="KW-0811">Translocation</keyword>
<keyword id="KW-0813">Transport</keyword>
<keyword id="KW-0862">Zinc</keyword>
<sequence>MLPKLLTSIFGSRNERLLKQYRRVVDQINALEPQFEQLGDDELRAKTEAFKQRVADGETLDQLLPEAFAVVREGSKRALKMRHFDVQLIGGMTLHNGKIGEMRTGEGKTLMATLPVYLNALAGKGVHVVTVNDYLARRDAEWMGRLYNFLGLTVGVNGPQMTREAKQAAYAADVTYGTNNEFGFDYLRDNMVTEVADRVQRSLNFAIVDEVDSILIDEARTPLIISGQAEDQTELYLRINAVAPLLKKQIGEADPRTGEGVIEAGDFTADEKTHQVVLTEAGHEHAEALLAQAGLLVEGASLYDAANITLMHHLYAALRARHLYHRDQHYVVQNGEVVIVDEFTGRLMTGRRWSDGLHQAVEAKEGVPIQAENQTLASITFQNYFRMYGKLAGMTGTADTEAYEFQEIYGLETVVIPPNKPTQRRDELDLVYKTSRERYEAVVKDIQDCYERGQPVLVGTTSIENSELISKLLEKYKLPHEVLNAKQHAREAEIIAQAGRPKAVTIATNMAGRGTDIVLGGNVEKQVQFIEADDAIPADDKLRRIQQLKDEWAGLHEQVKAAGGLRIVATERHESRRIDNQLRGRSGRQGDPGASRFYLSLEDPLMRIFAGDRVKAIMERLKMPDGEAIEAGIVSRSIEGAQRKVEARNFDIRKQLLEYDDVSNDQRKVIYQQRNDILESKELGAQIAHLRRGAMTDVVRTFVPVESVEEQWDIPGLEKVLRDEWQLDVPIAAQVDKSDAITDEDLVEMVAKTADETYAGKVALVGEEQFSGFERAVLLQSIDTHWREHLAALDYLRQGIHLRGYAQKNPKQEYKREAFELFSTLLDTVKMDVTRLLMTVRIRSTEEVTQAAEALEEKAEAISNLTYTHPTEDGGVAVEADPATEVANRMAEVPRAGRNDPCPCGSGKKYKQCHGRLA</sequence>
<gene>
    <name evidence="1" type="primary">secA</name>
    <name type="ordered locus">Mpe_A2744</name>
</gene>
<comment type="function">
    <text evidence="1">Part of the Sec protein translocase complex. Interacts with the SecYEG preprotein conducting channel. Has a central role in coupling the hydrolysis of ATP to the transfer of proteins into and across the cell membrane, serving both as a receptor for the preprotein-SecB complex and as an ATP-driven molecular motor driving the stepwise translocation of polypeptide chains across the membrane.</text>
</comment>
<comment type="catalytic activity">
    <reaction evidence="1">
        <text>ATP + H2O + cellular proteinSide 1 = ADP + phosphate + cellular proteinSide 2.</text>
        <dbReference type="EC" id="7.4.2.8"/>
    </reaction>
</comment>
<comment type="cofactor">
    <cofactor evidence="1">
        <name>Zn(2+)</name>
        <dbReference type="ChEBI" id="CHEBI:29105"/>
    </cofactor>
    <text evidence="1">May bind 1 zinc ion per subunit.</text>
</comment>
<comment type="subunit">
    <text evidence="1">Monomer and homodimer. Part of the essential Sec protein translocation apparatus which comprises SecA, SecYEG and auxiliary proteins SecDF-YajC and YidC.</text>
</comment>
<comment type="subcellular location">
    <subcellularLocation>
        <location evidence="1">Cell inner membrane</location>
        <topology evidence="1">Peripheral membrane protein</topology>
        <orientation evidence="1">Cytoplasmic side</orientation>
    </subcellularLocation>
    <subcellularLocation>
        <location evidence="1">Cytoplasm</location>
    </subcellularLocation>
    <text evidence="1">Distribution is 50-50.</text>
</comment>
<comment type="similarity">
    <text evidence="1">Belongs to the SecA family.</text>
</comment>
<name>SECA_METPP</name>
<feature type="chain" id="PRO_0000320849" description="Protein translocase subunit SecA">
    <location>
        <begin position="1"/>
        <end position="918"/>
    </location>
</feature>
<feature type="binding site" evidence="1">
    <location>
        <position position="87"/>
    </location>
    <ligand>
        <name>ATP</name>
        <dbReference type="ChEBI" id="CHEBI:30616"/>
    </ligand>
</feature>
<feature type="binding site" evidence="1">
    <location>
        <begin position="105"/>
        <end position="109"/>
    </location>
    <ligand>
        <name>ATP</name>
        <dbReference type="ChEBI" id="CHEBI:30616"/>
    </ligand>
</feature>
<feature type="binding site" evidence="1">
    <location>
        <position position="516"/>
    </location>
    <ligand>
        <name>ATP</name>
        <dbReference type="ChEBI" id="CHEBI:30616"/>
    </ligand>
</feature>
<feature type="binding site" evidence="1">
    <location>
        <position position="902"/>
    </location>
    <ligand>
        <name>Zn(2+)</name>
        <dbReference type="ChEBI" id="CHEBI:29105"/>
    </ligand>
</feature>
<feature type="binding site" evidence="1">
    <location>
        <position position="904"/>
    </location>
    <ligand>
        <name>Zn(2+)</name>
        <dbReference type="ChEBI" id="CHEBI:29105"/>
    </ligand>
</feature>
<feature type="binding site" evidence="1">
    <location>
        <position position="913"/>
    </location>
    <ligand>
        <name>Zn(2+)</name>
        <dbReference type="ChEBI" id="CHEBI:29105"/>
    </ligand>
</feature>
<feature type="binding site" evidence="1">
    <location>
        <position position="914"/>
    </location>
    <ligand>
        <name>Zn(2+)</name>
        <dbReference type="ChEBI" id="CHEBI:29105"/>
    </ligand>
</feature>